<proteinExistence type="inferred from homology"/>
<gene>
    <name evidence="1" type="primary">ctaB</name>
    <name type="ordered locus">DR_2618</name>
</gene>
<dbReference type="EC" id="2.5.1.141" evidence="1"/>
<dbReference type="EMBL" id="AE000513">
    <property type="protein sequence ID" value="AAF12156.1"/>
    <property type="molecule type" value="Genomic_DNA"/>
</dbReference>
<dbReference type="PIR" id="F75251">
    <property type="entry name" value="F75251"/>
</dbReference>
<dbReference type="RefSeq" id="NP_296337.1">
    <property type="nucleotide sequence ID" value="NC_001263.1"/>
</dbReference>
<dbReference type="RefSeq" id="WP_010889242.1">
    <property type="nucleotide sequence ID" value="NC_001263.1"/>
</dbReference>
<dbReference type="SMR" id="Q9RR78"/>
<dbReference type="FunCoup" id="Q9RR78">
    <property type="interactions" value="480"/>
</dbReference>
<dbReference type="STRING" id="243230.DR_2618"/>
<dbReference type="PaxDb" id="243230-DR_2618"/>
<dbReference type="EnsemblBacteria" id="AAF12156">
    <property type="protein sequence ID" value="AAF12156"/>
    <property type="gene ID" value="DR_2618"/>
</dbReference>
<dbReference type="GeneID" id="69518872"/>
<dbReference type="KEGG" id="dra:DR_2618"/>
<dbReference type="PATRIC" id="fig|243230.17.peg.2865"/>
<dbReference type="eggNOG" id="COG0109">
    <property type="taxonomic scope" value="Bacteria"/>
</dbReference>
<dbReference type="HOGENOM" id="CLU_029631_0_2_0"/>
<dbReference type="InParanoid" id="Q9RR78"/>
<dbReference type="OrthoDB" id="9814417at2"/>
<dbReference type="UniPathway" id="UPA00834">
    <property type="reaction ID" value="UER00712"/>
</dbReference>
<dbReference type="Proteomes" id="UP000002524">
    <property type="component" value="Chromosome 1"/>
</dbReference>
<dbReference type="GO" id="GO:0005886">
    <property type="term" value="C:plasma membrane"/>
    <property type="evidence" value="ECO:0007669"/>
    <property type="project" value="UniProtKB-SubCell"/>
</dbReference>
<dbReference type="GO" id="GO:0008495">
    <property type="term" value="F:protoheme IX farnesyltransferase activity"/>
    <property type="evidence" value="ECO:0000318"/>
    <property type="project" value="GO_Central"/>
</dbReference>
<dbReference type="GO" id="GO:0006783">
    <property type="term" value="P:heme biosynthetic process"/>
    <property type="evidence" value="ECO:0000318"/>
    <property type="project" value="GO_Central"/>
</dbReference>
<dbReference type="GO" id="GO:0048034">
    <property type="term" value="P:heme O biosynthetic process"/>
    <property type="evidence" value="ECO:0007669"/>
    <property type="project" value="UniProtKB-UniRule"/>
</dbReference>
<dbReference type="CDD" id="cd13957">
    <property type="entry name" value="PT_UbiA_Cox10"/>
    <property type="match status" value="1"/>
</dbReference>
<dbReference type="FunFam" id="1.10.357.140:FF:000001">
    <property type="entry name" value="Protoheme IX farnesyltransferase"/>
    <property type="match status" value="1"/>
</dbReference>
<dbReference type="Gene3D" id="1.10.357.140">
    <property type="entry name" value="UbiA prenyltransferase"/>
    <property type="match status" value="1"/>
</dbReference>
<dbReference type="HAMAP" id="MF_00154">
    <property type="entry name" value="CyoE_CtaB"/>
    <property type="match status" value="1"/>
</dbReference>
<dbReference type="InterPro" id="IPR006369">
    <property type="entry name" value="Protohaem_IX_farnesylTrfase"/>
</dbReference>
<dbReference type="InterPro" id="IPR000537">
    <property type="entry name" value="UbiA_prenyltransferase"/>
</dbReference>
<dbReference type="InterPro" id="IPR030470">
    <property type="entry name" value="UbiA_prenylTrfase_CS"/>
</dbReference>
<dbReference type="InterPro" id="IPR044878">
    <property type="entry name" value="UbiA_sf"/>
</dbReference>
<dbReference type="NCBIfam" id="TIGR01473">
    <property type="entry name" value="cyoE_ctaB"/>
    <property type="match status" value="1"/>
</dbReference>
<dbReference type="NCBIfam" id="NF003349">
    <property type="entry name" value="PRK04375.1-2"/>
    <property type="match status" value="1"/>
</dbReference>
<dbReference type="PANTHER" id="PTHR43448:SF7">
    <property type="entry name" value="4-HYDROXYBENZOATE SOLANESYLTRANSFERASE"/>
    <property type="match status" value="1"/>
</dbReference>
<dbReference type="PANTHER" id="PTHR43448">
    <property type="entry name" value="PROTOHEME IX FARNESYLTRANSFERASE, MITOCHONDRIAL"/>
    <property type="match status" value="1"/>
</dbReference>
<dbReference type="Pfam" id="PF01040">
    <property type="entry name" value="UbiA"/>
    <property type="match status" value="1"/>
</dbReference>
<dbReference type="PROSITE" id="PS00943">
    <property type="entry name" value="UBIA"/>
    <property type="match status" value="1"/>
</dbReference>
<reference key="1">
    <citation type="journal article" date="1999" name="Science">
        <title>Genome sequence of the radioresistant bacterium Deinococcus radiodurans R1.</title>
        <authorList>
            <person name="White O."/>
            <person name="Eisen J.A."/>
            <person name="Heidelberg J.F."/>
            <person name="Hickey E.K."/>
            <person name="Peterson J.D."/>
            <person name="Dodson R.J."/>
            <person name="Haft D.H."/>
            <person name="Gwinn M.L."/>
            <person name="Nelson W.C."/>
            <person name="Richardson D.L."/>
            <person name="Moffat K.S."/>
            <person name="Qin H."/>
            <person name="Jiang L."/>
            <person name="Pamphile W."/>
            <person name="Crosby M."/>
            <person name="Shen M."/>
            <person name="Vamathevan J.J."/>
            <person name="Lam P."/>
            <person name="McDonald L.A."/>
            <person name="Utterback T.R."/>
            <person name="Zalewski C."/>
            <person name="Makarova K.S."/>
            <person name="Aravind L."/>
            <person name="Daly M.J."/>
            <person name="Minton K.W."/>
            <person name="Fleischmann R.D."/>
            <person name="Ketchum K.A."/>
            <person name="Nelson K.E."/>
            <person name="Salzberg S.L."/>
            <person name="Smith H.O."/>
            <person name="Venter J.C."/>
            <person name="Fraser C.M."/>
        </authorList>
    </citation>
    <scope>NUCLEOTIDE SEQUENCE [LARGE SCALE GENOMIC DNA]</scope>
    <source>
        <strain>ATCC 13939 / DSM 20539 / JCM 16871 / CCUG 27074 / LMG 4051 / NBRC 15346 / NCIMB 9279 / VKM B-1422 / R1</strain>
    </source>
</reference>
<protein>
    <recommendedName>
        <fullName evidence="1">Protoheme IX farnesyltransferase</fullName>
        <ecNumber evidence="1">2.5.1.141</ecNumber>
    </recommendedName>
    <alternativeName>
        <fullName evidence="1">Heme B farnesyltransferase</fullName>
    </alternativeName>
    <alternativeName>
        <fullName evidence="1">Heme O synthase</fullName>
    </alternativeName>
</protein>
<name>COXX_DEIRA</name>
<evidence type="ECO:0000255" key="1">
    <source>
        <dbReference type="HAMAP-Rule" id="MF_00154"/>
    </source>
</evidence>
<keyword id="KW-1003">Cell membrane</keyword>
<keyword id="KW-0350">Heme biosynthesis</keyword>
<keyword id="KW-0472">Membrane</keyword>
<keyword id="KW-1185">Reference proteome</keyword>
<keyword id="KW-0808">Transferase</keyword>
<keyword id="KW-0812">Transmembrane</keyword>
<keyword id="KW-1133">Transmembrane helix</keyword>
<organism>
    <name type="scientific">Deinococcus radiodurans (strain ATCC 13939 / DSM 20539 / JCM 16871 / CCUG 27074 / LMG 4051 / NBRC 15346 / NCIMB 9279 / VKM B-1422 / R1)</name>
    <dbReference type="NCBI Taxonomy" id="243230"/>
    <lineage>
        <taxon>Bacteria</taxon>
        <taxon>Thermotogati</taxon>
        <taxon>Deinococcota</taxon>
        <taxon>Deinococci</taxon>
        <taxon>Deinococcales</taxon>
        <taxon>Deinococcaceae</taxon>
        <taxon>Deinococcus</taxon>
    </lineage>
</organism>
<feature type="chain" id="PRO_0000327047" description="Protoheme IX farnesyltransferase">
    <location>
        <begin position="1"/>
        <end position="313"/>
    </location>
</feature>
<feature type="transmembrane region" description="Helical" evidence="1">
    <location>
        <begin position="29"/>
        <end position="49"/>
    </location>
</feature>
<feature type="transmembrane region" description="Helical" evidence="1">
    <location>
        <begin position="57"/>
        <end position="77"/>
    </location>
</feature>
<feature type="transmembrane region" description="Helical" evidence="1">
    <location>
        <begin position="101"/>
        <end position="123"/>
    </location>
</feature>
<feature type="transmembrane region" description="Helical" evidence="1">
    <location>
        <begin position="124"/>
        <end position="144"/>
    </location>
</feature>
<feature type="transmembrane region" description="Helical" evidence="1">
    <location>
        <begin position="157"/>
        <end position="177"/>
    </location>
</feature>
<feature type="transmembrane region" description="Helical" evidence="1">
    <location>
        <begin position="185"/>
        <end position="205"/>
    </location>
</feature>
<feature type="transmembrane region" description="Helical" evidence="1">
    <location>
        <begin position="225"/>
        <end position="245"/>
    </location>
</feature>
<feature type="transmembrane region" description="Helical" evidence="1">
    <location>
        <begin position="247"/>
        <end position="267"/>
    </location>
</feature>
<feature type="transmembrane region" description="Helical" evidence="1">
    <location>
        <begin position="287"/>
        <end position="307"/>
    </location>
</feature>
<comment type="function">
    <text evidence="1">Converts heme B (protoheme IX) to heme O by substitution of the vinyl group on carbon 2 of heme B porphyrin ring with a hydroxyethyl farnesyl side group.</text>
</comment>
<comment type="catalytic activity">
    <reaction evidence="1">
        <text>heme b + (2E,6E)-farnesyl diphosphate + H2O = Fe(II)-heme o + diphosphate</text>
        <dbReference type="Rhea" id="RHEA:28070"/>
        <dbReference type="ChEBI" id="CHEBI:15377"/>
        <dbReference type="ChEBI" id="CHEBI:33019"/>
        <dbReference type="ChEBI" id="CHEBI:60344"/>
        <dbReference type="ChEBI" id="CHEBI:60530"/>
        <dbReference type="ChEBI" id="CHEBI:175763"/>
        <dbReference type="EC" id="2.5.1.141"/>
    </reaction>
</comment>
<comment type="pathway">
    <text evidence="1">Porphyrin-containing compound metabolism; heme O biosynthesis; heme O from protoheme: step 1/1.</text>
</comment>
<comment type="subcellular location">
    <subcellularLocation>
        <location evidence="1">Cell membrane</location>
        <topology evidence="1">Multi-pass membrane protein</topology>
    </subcellularLocation>
</comment>
<comment type="miscellaneous">
    <text evidence="1">Carbon 2 of the heme B porphyrin ring is defined according to the Fischer nomenclature.</text>
</comment>
<comment type="similarity">
    <text evidence="1">Belongs to the UbiA prenyltransferase family. Protoheme IX farnesyltransferase subfamily.</text>
</comment>
<accession>Q9RR78</accession>
<sequence length="313" mass="34712">MTSTPLSNSLPPTQHATWRDYLALTKPKVISLLLWTTVTAMFMAARGWPGDTFWSGLWLLIVVSVAGYMSAGSAGVFNMIIDRDIDLKMTRTAGRPTSSGLISSRNAAIFGTTLQVLSFVMLWVWGTPLAAWMSLAGFVFYVVIYTQWLKRTTWHNIVIGGAAGCFPPLVGWAAVTGDLNLFAGYLFAIIFFWTPVHFWALALMIKEEYREVGIPMLPVVHGDHMTVAQIGLYAIYTVVLSLMPVYFGAVSWIYFVSGALLGAWLLWLSYKLYRHVASGQPAERKVAVPLYLYSMLYLALLFLAGAIDRAVLS</sequence>